<dbReference type="EC" id="3.6.5.3" evidence="2"/>
<dbReference type="EMBL" id="CP000668">
    <property type="protein sequence ID" value="ABP38550.1"/>
    <property type="molecule type" value="Genomic_DNA"/>
</dbReference>
<dbReference type="SMR" id="A4TGY7"/>
<dbReference type="KEGG" id="ypp:YPDSF_0128"/>
<dbReference type="PATRIC" id="fig|386656.14.peg.439"/>
<dbReference type="GO" id="GO:0005829">
    <property type="term" value="C:cytosol"/>
    <property type="evidence" value="ECO:0007669"/>
    <property type="project" value="TreeGrafter"/>
</dbReference>
<dbReference type="GO" id="GO:0005525">
    <property type="term" value="F:GTP binding"/>
    <property type="evidence" value="ECO:0007669"/>
    <property type="project" value="UniProtKB-UniRule"/>
</dbReference>
<dbReference type="GO" id="GO:0003924">
    <property type="term" value="F:GTPase activity"/>
    <property type="evidence" value="ECO:0007669"/>
    <property type="project" value="InterPro"/>
</dbReference>
<dbReference type="GO" id="GO:0097216">
    <property type="term" value="F:guanosine tetraphosphate binding"/>
    <property type="evidence" value="ECO:0007669"/>
    <property type="project" value="UniProtKB-ARBA"/>
</dbReference>
<dbReference type="GO" id="GO:0003746">
    <property type="term" value="F:translation elongation factor activity"/>
    <property type="evidence" value="ECO:0007669"/>
    <property type="project" value="UniProtKB-UniRule"/>
</dbReference>
<dbReference type="CDD" id="cd01884">
    <property type="entry name" value="EF_Tu"/>
    <property type="match status" value="1"/>
</dbReference>
<dbReference type="CDD" id="cd03697">
    <property type="entry name" value="EFTU_II"/>
    <property type="match status" value="1"/>
</dbReference>
<dbReference type="CDD" id="cd03707">
    <property type="entry name" value="EFTU_III"/>
    <property type="match status" value="1"/>
</dbReference>
<dbReference type="FunFam" id="2.40.30.10:FF:000001">
    <property type="entry name" value="Elongation factor Tu"/>
    <property type="match status" value="1"/>
</dbReference>
<dbReference type="FunFam" id="3.40.50.300:FF:000003">
    <property type="entry name" value="Elongation factor Tu"/>
    <property type="match status" value="1"/>
</dbReference>
<dbReference type="Gene3D" id="3.40.50.300">
    <property type="entry name" value="P-loop containing nucleotide triphosphate hydrolases"/>
    <property type="match status" value="1"/>
</dbReference>
<dbReference type="Gene3D" id="2.40.30.10">
    <property type="entry name" value="Translation factors"/>
    <property type="match status" value="2"/>
</dbReference>
<dbReference type="HAMAP" id="MF_00118_B">
    <property type="entry name" value="EF_Tu_B"/>
    <property type="match status" value="1"/>
</dbReference>
<dbReference type="InterPro" id="IPR041709">
    <property type="entry name" value="EF-Tu_GTP-bd"/>
</dbReference>
<dbReference type="InterPro" id="IPR050055">
    <property type="entry name" value="EF-Tu_GTPase"/>
</dbReference>
<dbReference type="InterPro" id="IPR004161">
    <property type="entry name" value="EFTu-like_2"/>
</dbReference>
<dbReference type="InterPro" id="IPR033720">
    <property type="entry name" value="EFTU_2"/>
</dbReference>
<dbReference type="InterPro" id="IPR031157">
    <property type="entry name" value="G_TR_CS"/>
</dbReference>
<dbReference type="InterPro" id="IPR027417">
    <property type="entry name" value="P-loop_NTPase"/>
</dbReference>
<dbReference type="InterPro" id="IPR005225">
    <property type="entry name" value="Small_GTP-bd"/>
</dbReference>
<dbReference type="InterPro" id="IPR000795">
    <property type="entry name" value="T_Tr_GTP-bd_dom"/>
</dbReference>
<dbReference type="InterPro" id="IPR009000">
    <property type="entry name" value="Transl_B-barrel_sf"/>
</dbReference>
<dbReference type="InterPro" id="IPR009001">
    <property type="entry name" value="Transl_elong_EF1A/Init_IF2_C"/>
</dbReference>
<dbReference type="InterPro" id="IPR004541">
    <property type="entry name" value="Transl_elong_EFTu/EF1A_bac/org"/>
</dbReference>
<dbReference type="InterPro" id="IPR004160">
    <property type="entry name" value="Transl_elong_EFTu/EF1A_C"/>
</dbReference>
<dbReference type="NCBIfam" id="TIGR00485">
    <property type="entry name" value="EF-Tu"/>
    <property type="match status" value="1"/>
</dbReference>
<dbReference type="NCBIfam" id="NF000766">
    <property type="entry name" value="PRK00049.1"/>
    <property type="match status" value="1"/>
</dbReference>
<dbReference type="NCBIfam" id="NF009372">
    <property type="entry name" value="PRK12735.1"/>
    <property type="match status" value="1"/>
</dbReference>
<dbReference type="NCBIfam" id="NF009373">
    <property type="entry name" value="PRK12736.1"/>
    <property type="match status" value="1"/>
</dbReference>
<dbReference type="NCBIfam" id="TIGR00231">
    <property type="entry name" value="small_GTP"/>
    <property type="match status" value="1"/>
</dbReference>
<dbReference type="PANTHER" id="PTHR43721:SF22">
    <property type="entry name" value="ELONGATION FACTOR TU, MITOCHONDRIAL"/>
    <property type="match status" value="1"/>
</dbReference>
<dbReference type="PANTHER" id="PTHR43721">
    <property type="entry name" value="ELONGATION FACTOR TU-RELATED"/>
    <property type="match status" value="1"/>
</dbReference>
<dbReference type="Pfam" id="PF00009">
    <property type="entry name" value="GTP_EFTU"/>
    <property type="match status" value="1"/>
</dbReference>
<dbReference type="Pfam" id="PF03144">
    <property type="entry name" value="GTP_EFTU_D2"/>
    <property type="match status" value="1"/>
</dbReference>
<dbReference type="Pfam" id="PF03143">
    <property type="entry name" value="GTP_EFTU_D3"/>
    <property type="match status" value="1"/>
</dbReference>
<dbReference type="PRINTS" id="PR00315">
    <property type="entry name" value="ELONGATNFCT"/>
</dbReference>
<dbReference type="SUPFAM" id="SSF50465">
    <property type="entry name" value="EF-Tu/eEF-1alpha/eIF2-gamma C-terminal domain"/>
    <property type="match status" value="1"/>
</dbReference>
<dbReference type="SUPFAM" id="SSF52540">
    <property type="entry name" value="P-loop containing nucleoside triphosphate hydrolases"/>
    <property type="match status" value="1"/>
</dbReference>
<dbReference type="SUPFAM" id="SSF50447">
    <property type="entry name" value="Translation proteins"/>
    <property type="match status" value="1"/>
</dbReference>
<dbReference type="PROSITE" id="PS00301">
    <property type="entry name" value="G_TR_1"/>
    <property type="match status" value="1"/>
</dbReference>
<dbReference type="PROSITE" id="PS51722">
    <property type="entry name" value="G_TR_2"/>
    <property type="match status" value="1"/>
</dbReference>
<reference key="1">
    <citation type="submission" date="2007-02" db="EMBL/GenBank/DDBJ databases">
        <title>Complete sequence of chromosome of Yersinia pestis Pestoides F.</title>
        <authorList>
            <consortium name="US DOE Joint Genome Institute"/>
            <person name="Copeland A."/>
            <person name="Lucas S."/>
            <person name="Lapidus A."/>
            <person name="Barry K."/>
            <person name="Detter J.C."/>
            <person name="Glavina del Rio T."/>
            <person name="Hammon N."/>
            <person name="Israni S."/>
            <person name="Dalin E."/>
            <person name="Tice H."/>
            <person name="Pitluck S."/>
            <person name="Di Bartolo G."/>
            <person name="Chain P."/>
            <person name="Malfatti S."/>
            <person name="Shin M."/>
            <person name="Vergez L."/>
            <person name="Schmutz J."/>
            <person name="Larimer F."/>
            <person name="Land M."/>
            <person name="Hauser L."/>
            <person name="Worsham P."/>
            <person name="Chu M."/>
            <person name="Bearden S."/>
            <person name="Garcia E."/>
            <person name="Richardson P."/>
        </authorList>
    </citation>
    <scope>NUCLEOTIDE SEQUENCE [LARGE SCALE GENOMIC DNA]</scope>
    <source>
        <strain>Pestoides F</strain>
    </source>
</reference>
<comment type="function">
    <text evidence="2">GTP hydrolase that promotes the GTP-dependent binding of aminoacyl-tRNA to the A-site of ribosomes during protein biosynthesis.</text>
</comment>
<comment type="catalytic activity">
    <reaction evidence="2">
        <text>GTP + H2O = GDP + phosphate + H(+)</text>
        <dbReference type="Rhea" id="RHEA:19669"/>
        <dbReference type="ChEBI" id="CHEBI:15377"/>
        <dbReference type="ChEBI" id="CHEBI:15378"/>
        <dbReference type="ChEBI" id="CHEBI:37565"/>
        <dbReference type="ChEBI" id="CHEBI:43474"/>
        <dbReference type="ChEBI" id="CHEBI:58189"/>
        <dbReference type="EC" id="3.6.5.3"/>
    </reaction>
    <physiologicalReaction direction="left-to-right" evidence="2">
        <dbReference type="Rhea" id="RHEA:19670"/>
    </physiologicalReaction>
</comment>
<comment type="subunit">
    <text evidence="2">Monomer.</text>
</comment>
<comment type="subcellular location">
    <subcellularLocation>
        <location evidence="2">Cytoplasm</location>
    </subcellularLocation>
</comment>
<comment type="similarity">
    <text evidence="2">Belongs to the TRAFAC class translation factor GTPase superfamily. Classic translation factor GTPase family. EF-Tu/EF-1A subfamily.</text>
</comment>
<accession>A4TGY7</accession>
<gene>
    <name evidence="2" type="primary">tuf1</name>
    <name type="ordered locus">YPDSF_0128</name>
</gene>
<organism>
    <name type="scientific">Yersinia pestis (strain Pestoides F)</name>
    <dbReference type="NCBI Taxonomy" id="386656"/>
    <lineage>
        <taxon>Bacteria</taxon>
        <taxon>Pseudomonadati</taxon>
        <taxon>Pseudomonadota</taxon>
        <taxon>Gammaproteobacteria</taxon>
        <taxon>Enterobacterales</taxon>
        <taxon>Yersiniaceae</taxon>
        <taxon>Yersinia</taxon>
    </lineage>
</organism>
<name>EFTU1_YERPP</name>
<proteinExistence type="inferred from homology"/>
<sequence length="394" mass="43160">MSKEKFERTKPHVNVGTIGHVDHGKTTLTAAITTVLAKTYGGSARAFDQIDNAPEEKARGITINTSHVEYDTPARHYAHVDCPGHADYVKNMITGAAQMDGAILVVAATDGPMPQTREHILLGRQVGVPYIIVFMNKCDMVDDEELLELVEMEVRELLSAYDFPGDDLPVVRGSALKALEGEAEWEAKIIELAGYLDSYIPEPERAIDKPFLLPIEDVFSISGRGTVVTGRVERGIVKVGEEVEIVGIKDTVKSTCTGVEMFRKLLDEGRAGENVGVLLRGIKREDIERGQVLAKPGSIKPHTTFESEVYILSKDEGGRHTPFFKGYRPQFYFRTTDVTGTIELPEGVEMVMPGDNINMIVTLIHPIAMDDGLRFAIREGGRTVGAGVVAKVIA</sequence>
<protein>
    <recommendedName>
        <fullName evidence="2">Elongation factor Tu 1</fullName>
        <shortName evidence="2">EF-Tu 1</shortName>
        <ecNumber evidence="2">3.6.5.3</ecNumber>
    </recommendedName>
</protein>
<keyword id="KW-0963">Cytoplasm</keyword>
<keyword id="KW-0251">Elongation factor</keyword>
<keyword id="KW-0342">GTP-binding</keyword>
<keyword id="KW-0378">Hydrolase</keyword>
<keyword id="KW-0460">Magnesium</keyword>
<keyword id="KW-0479">Metal-binding</keyword>
<keyword id="KW-0547">Nucleotide-binding</keyword>
<keyword id="KW-0648">Protein biosynthesis</keyword>
<feature type="chain" id="PRO_0000337587" description="Elongation factor Tu 1">
    <location>
        <begin position="1"/>
        <end position="394"/>
    </location>
</feature>
<feature type="domain" description="tr-type G">
    <location>
        <begin position="10"/>
        <end position="204"/>
    </location>
</feature>
<feature type="region of interest" description="G1" evidence="1">
    <location>
        <begin position="19"/>
        <end position="26"/>
    </location>
</feature>
<feature type="region of interest" description="G2" evidence="1">
    <location>
        <begin position="60"/>
        <end position="64"/>
    </location>
</feature>
<feature type="region of interest" description="G3" evidence="1">
    <location>
        <begin position="81"/>
        <end position="84"/>
    </location>
</feature>
<feature type="region of interest" description="G4" evidence="1">
    <location>
        <begin position="136"/>
        <end position="139"/>
    </location>
</feature>
<feature type="region of interest" description="G5" evidence="1">
    <location>
        <begin position="174"/>
        <end position="176"/>
    </location>
</feature>
<feature type="binding site" evidence="2">
    <location>
        <begin position="19"/>
        <end position="26"/>
    </location>
    <ligand>
        <name>GTP</name>
        <dbReference type="ChEBI" id="CHEBI:37565"/>
    </ligand>
</feature>
<feature type="binding site" evidence="2">
    <location>
        <position position="26"/>
    </location>
    <ligand>
        <name>Mg(2+)</name>
        <dbReference type="ChEBI" id="CHEBI:18420"/>
    </ligand>
</feature>
<feature type="binding site" evidence="2">
    <location>
        <begin position="81"/>
        <end position="85"/>
    </location>
    <ligand>
        <name>GTP</name>
        <dbReference type="ChEBI" id="CHEBI:37565"/>
    </ligand>
</feature>
<feature type="binding site" evidence="2">
    <location>
        <begin position="136"/>
        <end position="139"/>
    </location>
    <ligand>
        <name>GTP</name>
        <dbReference type="ChEBI" id="CHEBI:37565"/>
    </ligand>
</feature>
<evidence type="ECO:0000250" key="1"/>
<evidence type="ECO:0000255" key="2">
    <source>
        <dbReference type="HAMAP-Rule" id="MF_00118"/>
    </source>
</evidence>